<accession>P9WK07</accession>
<accession>L0T8S1</accession>
<accession>O06584</accession>
<accession>P65340</accession>
<gene>
    <name evidence="1" type="primary">metE</name>
    <name type="ordered locus">Rv1133c</name>
    <name type="ORF">MTC22G8.22</name>
</gene>
<organism>
    <name type="scientific">Mycobacterium tuberculosis (strain ATCC 25618 / H37Rv)</name>
    <dbReference type="NCBI Taxonomy" id="83332"/>
    <lineage>
        <taxon>Bacteria</taxon>
        <taxon>Bacillati</taxon>
        <taxon>Actinomycetota</taxon>
        <taxon>Actinomycetes</taxon>
        <taxon>Mycobacteriales</taxon>
        <taxon>Mycobacteriaceae</taxon>
        <taxon>Mycobacterium</taxon>
        <taxon>Mycobacterium tuberculosis complex</taxon>
    </lineage>
</organism>
<keyword id="KW-0028">Amino-acid biosynthesis</keyword>
<keyword id="KW-0479">Metal-binding</keyword>
<keyword id="KW-0486">Methionine biosynthesis</keyword>
<keyword id="KW-0489">Methyltransferase</keyword>
<keyword id="KW-1185">Reference proteome</keyword>
<keyword id="KW-0677">Repeat</keyword>
<keyword id="KW-0808">Transferase</keyword>
<keyword id="KW-0862">Zinc</keyword>
<dbReference type="EC" id="2.1.1.14" evidence="1"/>
<dbReference type="EMBL" id="AL123456">
    <property type="protein sequence ID" value="CCP43887.1"/>
    <property type="molecule type" value="Genomic_DNA"/>
</dbReference>
<dbReference type="PIR" id="F70539">
    <property type="entry name" value="F70539"/>
</dbReference>
<dbReference type="RefSeq" id="NP_215649.1">
    <property type="nucleotide sequence ID" value="NC_000962.3"/>
</dbReference>
<dbReference type="RefSeq" id="WP_003405914.1">
    <property type="nucleotide sequence ID" value="NZ_NVQJ01000021.1"/>
</dbReference>
<dbReference type="SMR" id="P9WK07"/>
<dbReference type="FunCoup" id="P9WK07">
    <property type="interactions" value="266"/>
</dbReference>
<dbReference type="STRING" id="83332.Rv1133c"/>
<dbReference type="PaxDb" id="83332-Rv1133c"/>
<dbReference type="GeneID" id="888947"/>
<dbReference type="KEGG" id="mtu:Rv1133c"/>
<dbReference type="KEGG" id="mtv:RVBD_1133c"/>
<dbReference type="TubercuList" id="Rv1133c"/>
<dbReference type="eggNOG" id="COG0620">
    <property type="taxonomic scope" value="Bacteria"/>
</dbReference>
<dbReference type="InParanoid" id="P9WK07"/>
<dbReference type="OrthoDB" id="244285at2"/>
<dbReference type="PhylomeDB" id="P9WK07"/>
<dbReference type="UniPathway" id="UPA00051">
    <property type="reaction ID" value="UER00082"/>
</dbReference>
<dbReference type="Proteomes" id="UP000001584">
    <property type="component" value="Chromosome"/>
</dbReference>
<dbReference type="GO" id="GO:0005829">
    <property type="term" value="C:cytosol"/>
    <property type="evidence" value="ECO:0007005"/>
    <property type="project" value="MTBBASE"/>
</dbReference>
<dbReference type="GO" id="GO:0009274">
    <property type="term" value="C:peptidoglycan-based cell wall"/>
    <property type="evidence" value="ECO:0007005"/>
    <property type="project" value="MTBBASE"/>
</dbReference>
<dbReference type="GO" id="GO:0005886">
    <property type="term" value="C:plasma membrane"/>
    <property type="evidence" value="ECO:0007005"/>
    <property type="project" value="MTBBASE"/>
</dbReference>
<dbReference type="GO" id="GO:0003871">
    <property type="term" value="F:5-methyltetrahydropteroyltriglutamate-homocysteine S-methyltransferase activity"/>
    <property type="evidence" value="ECO:0007669"/>
    <property type="project" value="UniProtKB-UniRule"/>
</dbReference>
<dbReference type="GO" id="GO:0008270">
    <property type="term" value="F:zinc ion binding"/>
    <property type="evidence" value="ECO:0007669"/>
    <property type="project" value="InterPro"/>
</dbReference>
<dbReference type="GO" id="GO:0009086">
    <property type="term" value="P:methionine biosynthetic process"/>
    <property type="evidence" value="ECO:0007669"/>
    <property type="project" value="UniProtKB-UniRule"/>
</dbReference>
<dbReference type="GO" id="GO:0032259">
    <property type="term" value="P:methylation"/>
    <property type="evidence" value="ECO:0007669"/>
    <property type="project" value="UniProtKB-KW"/>
</dbReference>
<dbReference type="CDD" id="cd03311">
    <property type="entry name" value="CIMS_C_terminal_like"/>
    <property type="match status" value="1"/>
</dbReference>
<dbReference type="CDD" id="cd03312">
    <property type="entry name" value="CIMS_N_terminal_like"/>
    <property type="match status" value="1"/>
</dbReference>
<dbReference type="Gene3D" id="3.20.20.210">
    <property type="match status" value="2"/>
</dbReference>
<dbReference type="HAMAP" id="MF_00172">
    <property type="entry name" value="Meth_synth"/>
    <property type="match status" value="1"/>
</dbReference>
<dbReference type="InterPro" id="IPR013215">
    <property type="entry name" value="Cbl-indep_Met_Synth_N"/>
</dbReference>
<dbReference type="InterPro" id="IPR006276">
    <property type="entry name" value="Cobalamin-indep_Met_synthase"/>
</dbReference>
<dbReference type="InterPro" id="IPR002629">
    <property type="entry name" value="Met_Synth_C/arc"/>
</dbReference>
<dbReference type="InterPro" id="IPR038071">
    <property type="entry name" value="UROD/MetE-like_sf"/>
</dbReference>
<dbReference type="NCBIfam" id="TIGR01371">
    <property type="entry name" value="met_syn_B12ind"/>
    <property type="match status" value="1"/>
</dbReference>
<dbReference type="NCBIfam" id="NF003556">
    <property type="entry name" value="PRK05222.1"/>
    <property type="match status" value="1"/>
</dbReference>
<dbReference type="PANTHER" id="PTHR30519">
    <property type="entry name" value="5-METHYLTETRAHYDROPTEROYLTRIGLUTAMATE--HOMOCYSTEINE METHYLTRANSFERASE"/>
    <property type="match status" value="1"/>
</dbReference>
<dbReference type="Pfam" id="PF08267">
    <property type="entry name" value="Meth_synt_1"/>
    <property type="match status" value="1"/>
</dbReference>
<dbReference type="Pfam" id="PF01717">
    <property type="entry name" value="Meth_synt_2"/>
    <property type="match status" value="1"/>
</dbReference>
<dbReference type="PIRSF" id="PIRSF000382">
    <property type="entry name" value="MeTrfase_B12_ind"/>
    <property type="match status" value="1"/>
</dbReference>
<dbReference type="SUPFAM" id="SSF51726">
    <property type="entry name" value="UROD/MetE-like"/>
    <property type="match status" value="2"/>
</dbReference>
<proteinExistence type="evidence at protein level"/>
<feature type="chain" id="PRO_0000098641" description="5-methyltetrahydropteroyltriglutamate--homocysteine methyltransferase">
    <location>
        <begin position="1"/>
        <end position="759"/>
    </location>
</feature>
<feature type="region of interest" description="Disordered" evidence="2">
    <location>
        <begin position="1"/>
        <end position="22"/>
    </location>
</feature>
<feature type="compositionally biased region" description="Polar residues" evidence="2">
    <location>
        <begin position="1"/>
        <end position="16"/>
    </location>
</feature>
<feature type="active site" description="Proton donor" evidence="1">
    <location>
        <position position="700"/>
    </location>
</feature>
<feature type="binding site" evidence="1">
    <location>
        <begin position="24"/>
        <end position="27"/>
    </location>
    <ligand>
        <name>5-methyltetrahydropteroyltri-L-glutamate</name>
        <dbReference type="ChEBI" id="CHEBI:58207"/>
    </ligand>
</feature>
<feature type="binding site" evidence="1">
    <location>
        <position position="118"/>
    </location>
    <ligand>
        <name>5-methyltetrahydropteroyltri-L-glutamate</name>
        <dbReference type="ChEBI" id="CHEBI:58207"/>
    </ligand>
</feature>
<feature type="binding site" evidence="1">
    <location>
        <begin position="437"/>
        <end position="439"/>
    </location>
    <ligand>
        <name>L-homocysteine</name>
        <dbReference type="ChEBI" id="CHEBI:58199"/>
    </ligand>
</feature>
<feature type="binding site" evidence="1">
    <location>
        <begin position="437"/>
        <end position="439"/>
    </location>
    <ligand>
        <name>L-methionine</name>
        <dbReference type="ChEBI" id="CHEBI:57844"/>
    </ligand>
</feature>
<feature type="binding site" evidence="1">
    <location>
        <position position="490"/>
    </location>
    <ligand>
        <name>L-homocysteine</name>
        <dbReference type="ChEBI" id="CHEBI:58199"/>
    </ligand>
</feature>
<feature type="binding site" evidence="1">
    <location>
        <position position="490"/>
    </location>
    <ligand>
        <name>L-methionine</name>
        <dbReference type="ChEBI" id="CHEBI:57844"/>
    </ligand>
</feature>
<feature type="binding site" evidence="1">
    <location>
        <begin position="521"/>
        <end position="522"/>
    </location>
    <ligand>
        <name>5-methyltetrahydropteroyltri-L-glutamate</name>
        <dbReference type="ChEBI" id="CHEBI:58207"/>
    </ligand>
</feature>
<feature type="binding site" evidence="1">
    <location>
        <position position="567"/>
    </location>
    <ligand>
        <name>5-methyltetrahydropteroyltri-L-glutamate</name>
        <dbReference type="ChEBI" id="CHEBI:58207"/>
    </ligand>
</feature>
<feature type="binding site" evidence="1">
    <location>
        <position position="605"/>
    </location>
    <ligand>
        <name>L-homocysteine</name>
        <dbReference type="ChEBI" id="CHEBI:58199"/>
    </ligand>
</feature>
<feature type="binding site" evidence="1">
    <location>
        <position position="605"/>
    </location>
    <ligand>
        <name>L-methionine</name>
        <dbReference type="ChEBI" id="CHEBI:57844"/>
    </ligand>
</feature>
<feature type="binding site" evidence="1">
    <location>
        <position position="611"/>
    </location>
    <ligand>
        <name>5-methyltetrahydropteroyltri-L-glutamate</name>
        <dbReference type="ChEBI" id="CHEBI:58207"/>
    </ligand>
</feature>
<feature type="binding site" evidence="1">
    <location>
        <position position="647"/>
    </location>
    <ligand>
        <name>Zn(2+)</name>
        <dbReference type="ChEBI" id="CHEBI:29105"/>
        <note>catalytic</note>
    </ligand>
</feature>
<feature type="binding site" evidence="1">
    <location>
        <position position="649"/>
    </location>
    <ligand>
        <name>Zn(2+)</name>
        <dbReference type="ChEBI" id="CHEBI:29105"/>
        <note>catalytic</note>
    </ligand>
</feature>
<feature type="binding site" evidence="1">
    <location>
        <position position="671"/>
    </location>
    <ligand>
        <name>Zn(2+)</name>
        <dbReference type="ChEBI" id="CHEBI:29105"/>
        <note>catalytic</note>
    </ligand>
</feature>
<feature type="binding site" evidence="1">
    <location>
        <position position="732"/>
    </location>
    <ligand>
        <name>Zn(2+)</name>
        <dbReference type="ChEBI" id="CHEBI:29105"/>
        <note>catalytic</note>
    </ligand>
</feature>
<comment type="function">
    <text evidence="1">Catalyzes the transfer of a methyl group from 5-methyltetrahydrofolate to homocysteine resulting in methionine formation.</text>
</comment>
<comment type="catalytic activity">
    <reaction evidence="1">
        <text>5-methyltetrahydropteroyltri-L-glutamate + L-homocysteine = tetrahydropteroyltri-L-glutamate + L-methionine</text>
        <dbReference type="Rhea" id="RHEA:21196"/>
        <dbReference type="ChEBI" id="CHEBI:57844"/>
        <dbReference type="ChEBI" id="CHEBI:58140"/>
        <dbReference type="ChEBI" id="CHEBI:58199"/>
        <dbReference type="ChEBI" id="CHEBI:58207"/>
        <dbReference type="EC" id="2.1.1.14"/>
    </reaction>
</comment>
<comment type="cofactor">
    <cofactor evidence="1">
        <name>Zn(2+)</name>
        <dbReference type="ChEBI" id="CHEBI:29105"/>
    </cofactor>
    <text evidence="1">Binds 1 zinc ion per subunit.</text>
</comment>
<comment type="pathway">
    <text evidence="1">Amino-acid biosynthesis; L-methionine biosynthesis via de novo pathway; L-methionine from L-homocysteine (MetE route): step 1/1.</text>
</comment>
<comment type="similarity">
    <text evidence="1 3">Belongs to the vitamin-B12 independent methionine synthase family.</text>
</comment>
<protein>
    <recommendedName>
        <fullName evidence="1">5-methyltetrahydropteroyltriglutamate--homocysteine methyltransferase</fullName>
        <ecNumber evidence="1">2.1.1.14</ecNumber>
    </recommendedName>
    <alternativeName>
        <fullName evidence="1">Cobalamin-independent methionine synthase</fullName>
    </alternativeName>
    <alternativeName>
        <fullName evidence="1">Methionine synthase, vitamin-B12 independent isozyme</fullName>
    </alternativeName>
</protein>
<reference key="1">
    <citation type="journal article" date="1998" name="Nature">
        <title>Deciphering the biology of Mycobacterium tuberculosis from the complete genome sequence.</title>
        <authorList>
            <person name="Cole S.T."/>
            <person name="Brosch R."/>
            <person name="Parkhill J."/>
            <person name="Garnier T."/>
            <person name="Churcher C.M."/>
            <person name="Harris D.E."/>
            <person name="Gordon S.V."/>
            <person name="Eiglmeier K."/>
            <person name="Gas S."/>
            <person name="Barry C.E. III"/>
            <person name="Tekaia F."/>
            <person name="Badcock K."/>
            <person name="Basham D."/>
            <person name="Brown D."/>
            <person name="Chillingworth T."/>
            <person name="Connor R."/>
            <person name="Davies R.M."/>
            <person name="Devlin K."/>
            <person name="Feltwell T."/>
            <person name="Gentles S."/>
            <person name="Hamlin N."/>
            <person name="Holroyd S."/>
            <person name="Hornsby T."/>
            <person name="Jagels K."/>
            <person name="Krogh A."/>
            <person name="McLean J."/>
            <person name="Moule S."/>
            <person name="Murphy L.D."/>
            <person name="Oliver S."/>
            <person name="Osborne J."/>
            <person name="Quail M.A."/>
            <person name="Rajandream M.A."/>
            <person name="Rogers J."/>
            <person name="Rutter S."/>
            <person name="Seeger K."/>
            <person name="Skelton S."/>
            <person name="Squares S."/>
            <person name="Squares R."/>
            <person name="Sulston J.E."/>
            <person name="Taylor K."/>
            <person name="Whitehead S."/>
            <person name="Barrell B.G."/>
        </authorList>
    </citation>
    <scope>NUCLEOTIDE SEQUENCE [LARGE SCALE GENOMIC DNA]</scope>
    <source>
        <strain>ATCC 25618 / H37Rv</strain>
    </source>
</reference>
<reference key="2">
    <citation type="journal article" date="2011" name="Mol. Cell. Proteomics">
        <title>Proteogenomic analysis of Mycobacterium tuberculosis by high resolution mass spectrometry.</title>
        <authorList>
            <person name="Kelkar D.S."/>
            <person name="Kumar D."/>
            <person name="Kumar P."/>
            <person name="Balakrishnan L."/>
            <person name="Muthusamy B."/>
            <person name="Yadav A.K."/>
            <person name="Shrivastava P."/>
            <person name="Marimuthu A."/>
            <person name="Anand S."/>
            <person name="Sundaram H."/>
            <person name="Kingsbury R."/>
            <person name="Harsha H.C."/>
            <person name="Nair B."/>
            <person name="Prasad T.S."/>
            <person name="Chauhan D.S."/>
            <person name="Katoch K."/>
            <person name="Katoch V.M."/>
            <person name="Kumar P."/>
            <person name="Chaerkady R."/>
            <person name="Ramachandran S."/>
            <person name="Dash D."/>
            <person name="Pandey A."/>
        </authorList>
    </citation>
    <scope>IDENTIFICATION BY MASS SPECTROMETRY [LARGE SCALE ANALYSIS]</scope>
    <source>
        <strain>ATCC 25618 / H37Rv</strain>
    </source>
</reference>
<sequence>MTQPVRRQPFTATITGSPRIGPRRELKRATEGYWAGRTSRSELEAVAATLRRDTWSALAAAGLDSVPVNTFSYYDQMLDTAVLLGALPPRVSPVSDGLDRYFAAARGTDQIAPLEMTKWFDTNYHYLVPEIGPSTTFTLHPGKVLAELKEALGQGIPARPVIIGPITFLLLSKAVDGAGAPIERLEELVPVYSELLSLLADGGAQWVQFDEPALVTDLSPDAPALAEAVYTALCSVSNRPAIYVATYFGDPGAALPALARTPVEAIGVDLVAGADTSVAGVPELAGKTLVAGVVDGRNVWRTDLEAALGTLATLLGSAATVAVSTSCSTLHVPYSLEPETDLDDALRSWLAFGAEKVREVVVLARALRDGHDAVADEIASSRAAIASRKRDPRLHNGQIRARIEAIVASGAHRGNAAQRRASQDARLHLPPLPTTTIGSYPQTSAIRVARAALRAGEIDEAEYVRRMRQEITEVIALQERLGLDVLVHGEPERNDMVQYFAEQLAGFFATQNGWVQSYGSRCVRPPILYGDVSRPRAMTVEWITYAQSLTDKPVKGMLTGPVTILAWSFVRDDQPLADTANQVALAIRDETVDLQSAGIAVIQVDEPALRELLPLRRADQAEYLRWAVGAFRLATSGVSDATQIHTHLCYSEFGEVIGAIADLDADVTSIEAARSHMEVLDDLNAIGFANGVGPGVYDIHSPRVPSAEEMADSLRAALRAVPAERLWVNPDCGLKTRNVDEVTASLHNMVAAAREVRAG</sequence>
<evidence type="ECO:0000255" key="1">
    <source>
        <dbReference type="HAMAP-Rule" id="MF_00172"/>
    </source>
</evidence>
<evidence type="ECO:0000256" key="2">
    <source>
        <dbReference type="SAM" id="MobiDB-lite"/>
    </source>
</evidence>
<evidence type="ECO:0000305" key="3"/>
<name>METE_MYCTU</name>